<name>CA14_CONSE</name>
<sequence>IMYDCCSGSCSGYTGRC</sequence>
<comment type="function">
    <text evidence="1">Alpha-conotoxins act on postsynaptic membranes, they bind to the nicotinic acetylcholine receptors (nAChR) and thus inhibit them.</text>
</comment>
<comment type="subcellular location">
    <subcellularLocation>
        <location evidence="3">Secreted</location>
    </subcellularLocation>
</comment>
<comment type="tissue specificity">
    <text evidence="5">Expressed by the venom duct.</text>
</comment>
<comment type="domain">
    <text evidence="4">The cysteine framework is I (CC-C-C). Alpha3/5 pattern.</text>
</comment>
<comment type="similarity">
    <text evidence="4">Belongs to the conotoxin A superfamily.</text>
</comment>
<protein>
    <recommendedName>
        <fullName evidence="4">Alpha-conotoxin-like Sm1.4</fullName>
    </recommendedName>
</protein>
<dbReference type="GO" id="GO:0005576">
    <property type="term" value="C:extracellular region"/>
    <property type="evidence" value="ECO:0007669"/>
    <property type="project" value="UniProtKB-SubCell"/>
</dbReference>
<dbReference type="GO" id="GO:0035792">
    <property type="term" value="C:host cell postsynaptic membrane"/>
    <property type="evidence" value="ECO:0007669"/>
    <property type="project" value="UniProtKB-KW"/>
</dbReference>
<dbReference type="GO" id="GO:0030550">
    <property type="term" value="F:acetylcholine receptor inhibitor activity"/>
    <property type="evidence" value="ECO:0007669"/>
    <property type="project" value="UniProtKB-KW"/>
</dbReference>
<dbReference type="GO" id="GO:0090729">
    <property type="term" value="F:toxin activity"/>
    <property type="evidence" value="ECO:0007669"/>
    <property type="project" value="UniProtKB-KW"/>
</dbReference>
<accession>P0DPM2</accession>
<reference key="1">
    <citation type="journal article" date="2012" name="J. Proteome Res.">
        <title>Constrained de novo sequencing of conotoxins.</title>
        <authorList>
            <person name="Bhatia S."/>
            <person name="Kil Y.J."/>
            <person name="Ueberheide B."/>
            <person name="Chait B.T."/>
            <person name="Tayo L."/>
            <person name="Cruz L."/>
            <person name="Lu B."/>
            <person name="Yates J.R. III"/>
            <person name="Bern M."/>
        </authorList>
    </citation>
    <scope>PROTEIN SEQUENCE</scope>
    <scope>IDENTIFICATION BY MASS SPECTROMETRY</scope>
    <scope>SUBCELLULAR LOCATION</scope>
    <scope>OXIDATION AT MET-2</scope>
    <scope>AMIDATION AT CYS-17</scope>
    <source>
        <tissue>Venom</tissue>
    </source>
</reference>
<proteinExistence type="evidence at protein level"/>
<feature type="peptide" id="PRO_0000445062" description="Alpha-conotoxin-like Sm1.4" evidence="5">
    <location>
        <begin position="1"/>
        <end position="17"/>
    </location>
</feature>
<feature type="modified residue" description="Methionine sulfoxide; partial" evidence="3">
    <location>
        <position position="2"/>
    </location>
</feature>
<feature type="modified residue" description="Cysteine amide; partial" evidence="3">
    <location>
        <position position="17"/>
    </location>
</feature>
<feature type="disulfide bond" evidence="2">
    <location>
        <begin position="5"/>
        <end position="10"/>
    </location>
</feature>
<feature type="disulfide bond" evidence="2">
    <location>
        <begin position="6"/>
        <end position="17"/>
    </location>
</feature>
<feature type="unsure residue" description="I or L" evidence="5">
    <location>
        <position position="1"/>
    </location>
</feature>
<evidence type="ECO:0000250" key="1"/>
<evidence type="ECO:0000250" key="2">
    <source>
        <dbReference type="UniProtKB" id="P01519"/>
    </source>
</evidence>
<evidence type="ECO:0000269" key="3">
    <source>
    </source>
</evidence>
<evidence type="ECO:0000305" key="4"/>
<evidence type="ECO:0000305" key="5">
    <source>
    </source>
</evidence>
<keyword id="KW-0008">Acetylcholine receptor inhibiting toxin</keyword>
<keyword id="KW-0027">Amidation</keyword>
<keyword id="KW-0903">Direct protein sequencing</keyword>
<keyword id="KW-1015">Disulfide bond</keyword>
<keyword id="KW-0528">Neurotoxin</keyword>
<keyword id="KW-0558">Oxidation</keyword>
<keyword id="KW-0629">Postsynaptic neurotoxin</keyword>
<keyword id="KW-0964">Secreted</keyword>
<keyword id="KW-0800">Toxin</keyword>
<organism>
    <name type="scientific">Conus stercusmuscarum</name>
    <name type="common">Fly-specked cone</name>
    <dbReference type="NCBI Taxonomy" id="89452"/>
    <lineage>
        <taxon>Eukaryota</taxon>
        <taxon>Metazoa</taxon>
        <taxon>Spiralia</taxon>
        <taxon>Lophotrochozoa</taxon>
        <taxon>Mollusca</taxon>
        <taxon>Gastropoda</taxon>
        <taxon>Caenogastropoda</taxon>
        <taxon>Neogastropoda</taxon>
        <taxon>Conoidea</taxon>
        <taxon>Conidae</taxon>
        <taxon>Conus</taxon>
        <taxon>Pionoconus</taxon>
    </lineage>
</organism>